<comment type="function">
    <text evidence="1">Mediates the intracellular transfer of ceramide-1-phosphate (C1P) between organelle membranes and the cell membrane. Required for normal structure of the Golgi stacks. Can bind phosphoceramides with a variety of aliphatic chains, but has a preference for lipids with saturated C16:0 or monounsaturated C18:1 aliphatic chains, and is inefficient with phosphoceramides containing lignoceryl (C24:0). Plays a role in the regulation of the cellular levels of ceramide-1-phosphate, and thereby contributes to the regulation of phospholipase PLA2G4A activity and the release of arachidonic acid. Has no activity with galactosylceramide, lactosylceramide, sphingomyelin, phosphatidylcholine, phosphatidic acid and ceramide. C1P transfer is stimulated by phosphatidylserine in C1P source vesicles. Regulates autophagy and pyroptosis, but not apoptosis.</text>
</comment>
<comment type="catalytic activity">
    <reaction evidence="1">
        <text>N-(hexadecanoyl)-sphing-4-enine-1-phosphate(in) = N-(hexadecanoyl)-sphing-4-enine-1-phosphate(out)</text>
        <dbReference type="Rhea" id="RHEA:45680"/>
        <dbReference type="ChEBI" id="CHEBI:72963"/>
    </reaction>
    <physiologicalReaction direction="left-to-right" evidence="1">
        <dbReference type="Rhea" id="RHEA:45681"/>
    </physiologicalReaction>
</comment>
<comment type="catalytic activity">
    <reaction evidence="1">
        <text>N-(9Z-octadecenoyl)-sphing-4-enine-1-phosphate(in) = N-(9Z-octadecenoyl)-sphing-4-enine-1-phosphate(out)</text>
        <dbReference type="Rhea" id="RHEA:45688"/>
        <dbReference type="ChEBI" id="CHEBI:85378"/>
    </reaction>
    <physiologicalReaction direction="left-to-right" evidence="1">
        <dbReference type="Rhea" id="RHEA:45689"/>
    </physiologicalReaction>
</comment>
<comment type="subcellular location">
    <subcellularLocation>
        <location evidence="1">Cytoplasm</location>
        <location evidence="1">Cytosol</location>
    </subcellularLocation>
    <subcellularLocation>
        <location evidence="1">Golgi apparatus</location>
        <location evidence="1">trans-Golgi network membrane</location>
        <topology evidence="1">Peripheral membrane protein</topology>
    </subcellularLocation>
    <subcellularLocation>
        <location evidence="1">Cell membrane</location>
        <topology evidence="1">Peripheral membrane protein</topology>
        <orientation evidence="1">Cytoplasmic side</orientation>
    </subcellularLocation>
    <subcellularLocation>
        <location evidence="1">Endosome membrane</location>
        <topology evidence="1">Peripheral membrane protein</topology>
    </subcellularLocation>
    <subcellularLocation>
        <location evidence="1">Nucleus outer membrane</location>
        <topology evidence="1">Peripheral membrane protein</topology>
    </subcellularLocation>
</comment>
<comment type="similarity">
    <text evidence="2">Belongs to the GLTP family.</text>
</comment>
<protein>
    <recommendedName>
        <fullName>Ceramide-1-phosphate transfer protein</fullName>
    </recommendedName>
    <alternativeName>
        <fullName>Glycolipid transfer protein domain-containing protein 1</fullName>
        <shortName>CPTP</shortName>
    </alternativeName>
</protein>
<sequence>MADAFSLQRVLETFRSSLSENKEVYIKYYIAGWQELVSFMNSLGNVFSFISKDVVSKIQILENFLSGENGSNYVTIQSMVKYELENDLVDLTKRGSHPESGCRTLLRLHRALRWLELFLERLRTSTEDSKTSVMCSDAYNESLANHHPWLIRKAVGVAFCALPGRETFFDVMNAGDHTQVVALLGESLPLIAEVYQITEDLYAKNNLLELP</sequence>
<name>CPTP_DANRE</name>
<proteinExistence type="evidence at transcript level"/>
<gene>
    <name type="primary">cptp</name>
    <name type="synonym">gltpd1</name>
    <name type="ORF">zgc:92000</name>
</gene>
<dbReference type="EMBL" id="BC078407">
    <property type="protein sequence ID" value="AAH78407.1"/>
    <property type="molecule type" value="mRNA"/>
</dbReference>
<dbReference type="RefSeq" id="NP_001003497.1">
    <property type="nucleotide sequence ID" value="NM_001003497.1"/>
</dbReference>
<dbReference type="SMR" id="Q6DBQ8"/>
<dbReference type="FunCoup" id="Q6DBQ8">
    <property type="interactions" value="1875"/>
</dbReference>
<dbReference type="STRING" id="7955.ENSDARP00000068896"/>
<dbReference type="PaxDb" id="7955-ENSDARP00000068896"/>
<dbReference type="DNASU" id="791641"/>
<dbReference type="GeneID" id="791641"/>
<dbReference type="KEGG" id="dre:791641"/>
<dbReference type="AGR" id="ZFIN:ZDB-GENE-040801-240"/>
<dbReference type="CTD" id="80772"/>
<dbReference type="ZFIN" id="ZDB-GENE-040801-240">
    <property type="gene designation" value="cptp"/>
</dbReference>
<dbReference type="eggNOG" id="KOG4189">
    <property type="taxonomic scope" value="Eukaryota"/>
</dbReference>
<dbReference type="InParanoid" id="Q6DBQ8"/>
<dbReference type="OrthoDB" id="116883at2759"/>
<dbReference type="PhylomeDB" id="Q6DBQ8"/>
<dbReference type="Reactome" id="R-DRE-9845576">
    <property type="pathway name" value="Glycosphingolipid transport"/>
</dbReference>
<dbReference type="PRO" id="PR:Q6DBQ8"/>
<dbReference type="Proteomes" id="UP000000437">
    <property type="component" value="Chromosome 23"/>
</dbReference>
<dbReference type="GO" id="GO:0005829">
    <property type="term" value="C:cytosol"/>
    <property type="evidence" value="ECO:0000318"/>
    <property type="project" value="GO_Central"/>
</dbReference>
<dbReference type="GO" id="GO:0010008">
    <property type="term" value="C:endosome membrane"/>
    <property type="evidence" value="ECO:0007669"/>
    <property type="project" value="UniProtKB-SubCell"/>
</dbReference>
<dbReference type="GO" id="GO:0005794">
    <property type="term" value="C:Golgi apparatus"/>
    <property type="evidence" value="ECO:0007669"/>
    <property type="project" value="UniProtKB-SubCell"/>
</dbReference>
<dbReference type="GO" id="GO:0005640">
    <property type="term" value="C:nuclear outer membrane"/>
    <property type="evidence" value="ECO:0007669"/>
    <property type="project" value="UniProtKB-SubCell"/>
</dbReference>
<dbReference type="GO" id="GO:0005886">
    <property type="term" value="C:plasma membrane"/>
    <property type="evidence" value="ECO:0007669"/>
    <property type="project" value="UniProtKB-SubCell"/>
</dbReference>
<dbReference type="GO" id="GO:1902387">
    <property type="term" value="F:ceramide 1-phosphate binding"/>
    <property type="evidence" value="ECO:0000250"/>
    <property type="project" value="UniProtKB"/>
</dbReference>
<dbReference type="GO" id="GO:1902388">
    <property type="term" value="F:ceramide 1-phosphate transfer activity"/>
    <property type="evidence" value="ECO:0000250"/>
    <property type="project" value="UniProtKB"/>
</dbReference>
<dbReference type="GO" id="GO:0005543">
    <property type="term" value="F:phospholipid binding"/>
    <property type="evidence" value="ECO:0000250"/>
    <property type="project" value="UniProtKB"/>
</dbReference>
<dbReference type="GO" id="GO:1902389">
    <property type="term" value="P:ceramide 1-phosphate transport"/>
    <property type="evidence" value="ECO:0000250"/>
    <property type="project" value="UniProtKB"/>
</dbReference>
<dbReference type="GO" id="GO:0035627">
    <property type="term" value="P:ceramide transport"/>
    <property type="evidence" value="ECO:0000318"/>
    <property type="project" value="GO_Central"/>
</dbReference>
<dbReference type="GO" id="GO:0120009">
    <property type="term" value="P:intermembrane lipid transfer"/>
    <property type="evidence" value="ECO:0000318"/>
    <property type="project" value="GO_Central"/>
</dbReference>
<dbReference type="GO" id="GO:0010507">
    <property type="term" value="P:negative regulation of autophagy"/>
    <property type="evidence" value="ECO:0000250"/>
    <property type="project" value="UniProtKB"/>
</dbReference>
<dbReference type="GO" id="GO:0032691">
    <property type="term" value="P:negative regulation of interleukin-1 beta production"/>
    <property type="evidence" value="ECO:0000250"/>
    <property type="project" value="UniProtKB"/>
</dbReference>
<dbReference type="GO" id="GO:1900226">
    <property type="term" value="P:negative regulation of NLRP3 inflammasome complex assembly"/>
    <property type="evidence" value="ECO:0000250"/>
    <property type="project" value="UniProtKB"/>
</dbReference>
<dbReference type="FunFam" id="1.10.3520.10:FF:000002">
    <property type="entry name" value="Ceramide-1-phosphate transfer protein"/>
    <property type="match status" value="1"/>
</dbReference>
<dbReference type="Gene3D" id="1.10.3520.10">
    <property type="entry name" value="Glycolipid transfer protein"/>
    <property type="match status" value="1"/>
</dbReference>
<dbReference type="InterPro" id="IPR036497">
    <property type="entry name" value="GLTP_sf"/>
</dbReference>
<dbReference type="InterPro" id="IPR014830">
    <property type="entry name" value="Glycolipid_transfer_prot_dom"/>
</dbReference>
<dbReference type="PANTHER" id="PTHR10219:SF20">
    <property type="entry name" value="CERAMIDE-1-PHOSPHATE TRANSFER PROTEIN"/>
    <property type="match status" value="1"/>
</dbReference>
<dbReference type="PANTHER" id="PTHR10219">
    <property type="entry name" value="GLYCOLIPID TRANSFER PROTEIN-RELATED"/>
    <property type="match status" value="1"/>
</dbReference>
<dbReference type="Pfam" id="PF08718">
    <property type="entry name" value="GLTP"/>
    <property type="match status" value="1"/>
</dbReference>
<dbReference type="SUPFAM" id="SSF110004">
    <property type="entry name" value="Glycolipid transfer protein, GLTP"/>
    <property type="match status" value="1"/>
</dbReference>
<evidence type="ECO:0000250" key="1">
    <source>
        <dbReference type="UniProtKB" id="Q5TA50"/>
    </source>
</evidence>
<evidence type="ECO:0000305" key="2"/>
<feature type="chain" id="PRO_0000317159" description="Ceramide-1-phosphate transfer protein">
    <location>
        <begin position="1"/>
        <end position="211"/>
    </location>
</feature>
<feature type="binding site" evidence="1">
    <location>
        <position position="53"/>
    </location>
    <ligand>
        <name>an N-acylsphingoid base 1-phosphate</name>
        <dbReference type="ChEBI" id="CHEBI:84404"/>
    </ligand>
</feature>
<feature type="binding site" evidence="1">
    <location>
        <position position="57"/>
    </location>
    <ligand>
        <name>an N-acylsphingoid base 1-phosphate</name>
        <dbReference type="ChEBI" id="CHEBI:84404"/>
    </ligand>
</feature>
<feature type="binding site" evidence="1">
    <location>
        <position position="103"/>
    </location>
    <ligand>
        <name>an N-acylsphingoid base 1-phosphate</name>
        <dbReference type="ChEBI" id="CHEBI:84404"/>
    </ligand>
</feature>
<feature type="binding site" evidence="1">
    <location>
        <position position="107"/>
    </location>
    <ligand>
        <name>an N-acylsphingoid base 1-phosphate</name>
        <dbReference type="ChEBI" id="CHEBI:84404"/>
    </ligand>
</feature>
<feature type="binding site" evidence="1">
    <location>
        <position position="147"/>
    </location>
    <ligand>
        <name>an N-acylsphingoid base 1-phosphate</name>
        <dbReference type="ChEBI" id="CHEBI:84404"/>
    </ligand>
</feature>
<organism>
    <name type="scientific">Danio rerio</name>
    <name type="common">Zebrafish</name>
    <name type="synonym">Brachydanio rerio</name>
    <dbReference type="NCBI Taxonomy" id="7955"/>
    <lineage>
        <taxon>Eukaryota</taxon>
        <taxon>Metazoa</taxon>
        <taxon>Chordata</taxon>
        <taxon>Craniata</taxon>
        <taxon>Vertebrata</taxon>
        <taxon>Euteleostomi</taxon>
        <taxon>Actinopterygii</taxon>
        <taxon>Neopterygii</taxon>
        <taxon>Teleostei</taxon>
        <taxon>Ostariophysi</taxon>
        <taxon>Cypriniformes</taxon>
        <taxon>Danionidae</taxon>
        <taxon>Danioninae</taxon>
        <taxon>Danio</taxon>
    </lineage>
</organism>
<reference key="1">
    <citation type="submission" date="2004-07" db="EMBL/GenBank/DDBJ databases">
        <authorList>
            <consortium name="NIH - Zebrafish Gene Collection (ZGC) project"/>
        </authorList>
    </citation>
    <scope>NUCLEOTIDE SEQUENCE [LARGE SCALE MRNA]</scope>
</reference>
<keyword id="KW-1003">Cell membrane</keyword>
<keyword id="KW-0963">Cytoplasm</keyword>
<keyword id="KW-0967">Endosome</keyword>
<keyword id="KW-0333">Golgi apparatus</keyword>
<keyword id="KW-0445">Lipid transport</keyword>
<keyword id="KW-0446">Lipid-binding</keyword>
<keyword id="KW-0472">Membrane</keyword>
<keyword id="KW-0539">Nucleus</keyword>
<keyword id="KW-1185">Reference proteome</keyword>
<keyword id="KW-0813">Transport</keyword>
<accession>Q6DBQ8</accession>